<sequence>MDHLLQHQDVFGNYNKAREAMGLSYSSNPTPLDNDQKKPSPATAVTRPQPPELALRCPRCDSTNTKFCYYNNYSLTQPRYFCKSCRRYWTKGGTLRNIPVGGGCRKNKRSTSSAARSLRTTPEPASHDGKVFSAAGFNGYSNNEHIDLSLAFALLNKQHPGSSSQLGFHSELGSSHQSDMEGMFGTSQQKENATYAFGNGSSGLGDPSRVLWGFPWQMNGESFGMMNIGGGGGHVDQIDSGREMWTNMNYINSGALM</sequence>
<evidence type="ECO:0000250" key="1">
    <source>
        <dbReference type="UniProtKB" id="Q9M2U1"/>
    </source>
</evidence>
<evidence type="ECO:0000255" key="2">
    <source>
        <dbReference type="PROSITE-ProRule" id="PRU00071"/>
    </source>
</evidence>
<evidence type="ECO:0000256" key="3">
    <source>
        <dbReference type="SAM" id="MobiDB-lite"/>
    </source>
</evidence>
<evidence type="ECO:0000269" key="4">
    <source>
    </source>
</evidence>
<evidence type="ECO:0000269" key="5">
    <source>
    </source>
</evidence>
<evidence type="ECO:0000269" key="6">
    <source>
    </source>
</evidence>
<evidence type="ECO:0000303" key="7">
    <source>
    </source>
</evidence>
<evidence type="ECO:0000303" key="8">
    <source>
    </source>
</evidence>
<evidence type="ECO:0000303" key="9">
    <source>
    </source>
</evidence>
<evidence type="ECO:0000305" key="10"/>
<evidence type="ECO:0000312" key="11">
    <source>
        <dbReference type="Araport" id="AT5G60200"/>
    </source>
</evidence>
<evidence type="ECO:0000312" key="12">
    <source>
        <dbReference type="EMBL" id="BAA97501.1"/>
    </source>
</evidence>
<feature type="chain" id="PRO_0000074293" description="Dof zinc finger protein DOF5.3">
    <location>
        <begin position="1"/>
        <end position="257"/>
    </location>
</feature>
<feature type="zinc finger region" description="Dof-type" evidence="2">
    <location>
        <begin position="55"/>
        <end position="109"/>
    </location>
</feature>
<feature type="region of interest" description="Disordered" evidence="3">
    <location>
        <begin position="23"/>
        <end position="50"/>
    </location>
</feature>
<feature type="region of interest" description="Disordered" evidence="3">
    <location>
        <begin position="104"/>
        <end position="127"/>
    </location>
</feature>
<feature type="compositionally biased region" description="Polar residues" evidence="3">
    <location>
        <begin position="24"/>
        <end position="33"/>
    </location>
</feature>
<feature type="compositionally biased region" description="Low complexity" evidence="3">
    <location>
        <begin position="110"/>
        <end position="121"/>
    </location>
</feature>
<feature type="binding site" evidence="2">
    <location>
        <position position="57"/>
    </location>
    <ligand>
        <name>Zn(2+)</name>
        <dbReference type="ChEBI" id="CHEBI:29105"/>
    </ligand>
</feature>
<feature type="binding site" evidence="2">
    <location>
        <position position="60"/>
    </location>
    <ligand>
        <name>Zn(2+)</name>
        <dbReference type="ChEBI" id="CHEBI:29105"/>
    </ligand>
</feature>
<feature type="binding site" evidence="2">
    <location>
        <position position="82"/>
    </location>
    <ligand>
        <name>Zn(2+)</name>
        <dbReference type="ChEBI" id="CHEBI:29105"/>
    </ligand>
</feature>
<feature type="binding site" evidence="2">
    <location>
        <position position="85"/>
    </location>
    <ligand>
        <name>Zn(2+)</name>
        <dbReference type="ChEBI" id="CHEBI:29105"/>
    </ligand>
</feature>
<feature type="sequence conflict" description="In Ref. 5; AAM63264." evidence="10" ref="5">
    <original>P</original>
    <variation>Q</variation>
    <location>
        <position position="31"/>
    </location>
</feature>
<feature type="sequence conflict" description="In Ref. 5; AAM63264." evidence="10" ref="5">
    <original>V</original>
    <variation>AAA</variation>
    <location>
        <position position="45"/>
    </location>
</feature>
<keyword id="KW-0238">DNA-binding</keyword>
<keyword id="KW-0479">Metal-binding</keyword>
<keyword id="KW-0539">Nucleus</keyword>
<keyword id="KW-1185">Reference proteome</keyword>
<keyword id="KW-0804">Transcription</keyword>
<keyword id="KW-0805">Transcription regulation</keyword>
<keyword id="KW-0862">Zinc</keyword>
<keyword id="KW-0863">Zinc-finger</keyword>
<organism>
    <name type="scientific">Arabidopsis thaliana</name>
    <name type="common">Mouse-ear cress</name>
    <dbReference type="NCBI Taxonomy" id="3702"/>
    <lineage>
        <taxon>Eukaryota</taxon>
        <taxon>Viridiplantae</taxon>
        <taxon>Streptophyta</taxon>
        <taxon>Embryophyta</taxon>
        <taxon>Tracheophyta</taxon>
        <taxon>Spermatophyta</taxon>
        <taxon>Magnoliopsida</taxon>
        <taxon>eudicotyledons</taxon>
        <taxon>Gunneridae</taxon>
        <taxon>Pentapetalae</taxon>
        <taxon>rosids</taxon>
        <taxon>malvids</taxon>
        <taxon>Brassicales</taxon>
        <taxon>Brassicaceae</taxon>
        <taxon>Camelineae</taxon>
        <taxon>Arabidopsis</taxon>
    </lineage>
</organism>
<reference key="1">
    <citation type="submission" date="1999-04" db="EMBL/GenBank/DDBJ databases">
        <title>Structural analysis of Arabidopsis thaliana chromosome 5. XI.</title>
        <authorList>
            <person name="Kaneko T."/>
            <person name="Katoh T."/>
            <person name="Asamizu E."/>
            <person name="Sato S."/>
            <person name="Nakamura Y."/>
            <person name="Kotani H."/>
            <person name="Tabata S."/>
        </authorList>
    </citation>
    <scope>NUCLEOTIDE SEQUENCE [LARGE SCALE GENOMIC DNA]</scope>
    <source>
        <strain>cv. Columbia</strain>
    </source>
</reference>
<reference key="2">
    <citation type="journal article" date="2017" name="Plant J.">
        <title>Araport11: a complete reannotation of the Arabidopsis thaliana reference genome.</title>
        <authorList>
            <person name="Cheng C.Y."/>
            <person name="Krishnakumar V."/>
            <person name="Chan A.P."/>
            <person name="Thibaud-Nissen F."/>
            <person name="Schobel S."/>
            <person name="Town C.D."/>
        </authorList>
    </citation>
    <scope>GENOME REANNOTATION</scope>
    <source>
        <strain>cv. Columbia</strain>
    </source>
</reference>
<reference key="3">
    <citation type="journal article" date="2003" name="Science">
        <title>Empirical analysis of transcriptional activity in the Arabidopsis genome.</title>
        <authorList>
            <person name="Yamada K."/>
            <person name="Lim J."/>
            <person name="Dale J.M."/>
            <person name="Chen H."/>
            <person name="Shinn P."/>
            <person name="Palm C.J."/>
            <person name="Southwick A.M."/>
            <person name="Wu H.C."/>
            <person name="Kim C.J."/>
            <person name="Nguyen M."/>
            <person name="Pham P.K."/>
            <person name="Cheuk R.F."/>
            <person name="Karlin-Newmann G."/>
            <person name="Liu S.X."/>
            <person name="Lam B."/>
            <person name="Sakano H."/>
            <person name="Wu T."/>
            <person name="Yu G."/>
            <person name="Miranda M."/>
            <person name="Quach H.L."/>
            <person name="Tripp M."/>
            <person name="Chang C.H."/>
            <person name="Lee J.M."/>
            <person name="Toriumi M.J."/>
            <person name="Chan M.M."/>
            <person name="Tang C.C."/>
            <person name="Onodera C.S."/>
            <person name="Deng J.M."/>
            <person name="Akiyama K."/>
            <person name="Ansari Y."/>
            <person name="Arakawa T."/>
            <person name="Banh J."/>
            <person name="Banno F."/>
            <person name="Bowser L."/>
            <person name="Brooks S.Y."/>
            <person name="Carninci P."/>
            <person name="Chao Q."/>
            <person name="Choy N."/>
            <person name="Enju A."/>
            <person name="Goldsmith A.D."/>
            <person name="Gurjal M."/>
            <person name="Hansen N.F."/>
            <person name="Hayashizaki Y."/>
            <person name="Johnson-Hopson C."/>
            <person name="Hsuan V.W."/>
            <person name="Iida K."/>
            <person name="Karnes M."/>
            <person name="Khan S."/>
            <person name="Koesema E."/>
            <person name="Ishida J."/>
            <person name="Jiang P.X."/>
            <person name="Jones T."/>
            <person name="Kawai J."/>
            <person name="Kamiya A."/>
            <person name="Meyers C."/>
            <person name="Nakajima M."/>
            <person name="Narusaka M."/>
            <person name="Seki M."/>
            <person name="Sakurai T."/>
            <person name="Satou M."/>
            <person name="Tamse R."/>
            <person name="Vaysberg M."/>
            <person name="Wallender E.K."/>
            <person name="Wong C."/>
            <person name="Yamamura Y."/>
            <person name="Yuan S."/>
            <person name="Shinozaki K."/>
            <person name="Davis R.W."/>
            <person name="Theologis A."/>
            <person name="Ecker J.R."/>
        </authorList>
    </citation>
    <scope>NUCLEOTIDE SEQUENCE [LARGE SCALE MRNA]</scope>
    <source>
        <strain>cv. Columbia</strain>
    </source>
</reference>
<reference key="4">
    <citation type="submission" date="2006-07" db="EMBL/GenBank/DDBJ databases">
        <title>Large-scale analysis of RIKEN Arabidopsis full-length (RAFL) cDNAs.</title>
        <authorList>
            <person name="Totoki Y."/>
            <person name="Seki M."/>
            <person name="Ishida J."/>
            <person name="Nakajima M."/>
            <person name="Enju A."/>
            <person name="Kamiya A."/>
            <person name="Narusaka M."/>
            <person name="Shin-i T."/>
            <person name="Nakagawa M."/>
            <person name="Sakamoto N."/>
            <person name="Oishi K."/>
            <person name="Kohara Y."/>
            <person name="Kobayashi M."/>
            <person name="Toyoda A."/>
            <person name="Sakaki Y."/>
            <person name="Sakurai T."/>
            <person name="Iida K."/>
            <person name="Akiyama K."/>
            <person name="Satou M."/>
            <person name="Toyoda T."/>
            <person name="Konagaya A."/>
            <person name="Carninci P."/>
            <person name="Kawai J."/>
            <person name="Hayashizaki Y."/>
            <person name="Shinozaki K."/>
        </authorList>
    </citation>
    <scope>NUCLEOTIDE SEQUENCE [LARGE SCALE MRNA]</scope>
    <source>
        <strain>cv. Columbia</strain>
    </source>
</reference>
<reference key="5">
    <citation type="submission" date="2002-03" db="EMBL/GenBank/DDBJ databases">
        <title>Full-length cDNA from Arabidopsis thaliana.</title>
        <authorList>
            <person name="Brover V.V."/>
            <person name="Troukhan M.E."/>
            <person name="Alexandrov N.A."/>
            <person name="Lu Y.-P."/>
            <person name="Flavell R.B."/>
            <person name="Feldmann K.A."/>
        </authorList>
    </citation>
    <scope>NUCLEOTIDE SEQUENCE [LARGE SCALE MRNA]</scope>
</reference>
<reference key="6">
    <citation type="submission" date="2009-03" db="EMBL/GenBank/DDBJ databases">
        <title>ORF cloning and analysis of Arabidopsis transcription factor genes.</title>
        <authorList>
            <person name="Fujita M."/>
            <person name="Mizukado S."/>
            <person name="Seki M."/>
            <person name="Shinozaki K."/>
            <person name="Mitsuda N."/>
            <person name="Takiguchi Y."/>
            <person name="Takagi M."/>
        </authorList>
    </citation>
    <scope>NUCLEOTIDE SEQUENCE [LARGE SCALE MRNA]</scope>
</reference>
<reference key="7">
    <citation type="journal article" date="2002" name="Trends Plant Sci.">
        <title>The Dof family of plant transcription factors.</title>
        <authorList>
            <person name="Yanagisawa S."/>
        </authorList>
    </citation>
    <scope>GENE FAMILY</scope>
    <scope>NOMENCLATURE</scope>
</reference>
<reference key="8">
    <citation type="journal article" date="2010" name="Int. J. Dev. Biol.">
        <title>Expression of DOF genes identifies early stages of vascular development in Arabidopsis leaves.</title>
        <authorList>
            <person name="Gardiner J."/>
            <person name="Sherr I."/>
            <person name="Scarpella E."/>
        </authorList>
    </citation>
    <scope>DEVELOPMENTAL STAGE</scope>
    <scope>TISSUE SPECIFICITY</scope>
    <source>
        <strain>cv. Columbia</strain>
    </source>
</reference>
<reference key="9">
    <citation type="journal article" date="2010" name="Nature">
        <title>MONOPTEROS controls embryonic root initiation by regulating a mobile transcription factor.</title>
        <authorList>
            <person name="Schlereth A."/>
            <person name="Moller B."/>
            <person name="Liu W."/>
            <person name="Kientz M."/>
            <person name="Flipse J."/>
            <person name="Rademacher E.H."/>
            <person name="Schmid M."/>
            <person name="Jurgens G."/>
            <person name="Weijers D."/>
        </authorList>
    </citation>
    <scope>INDUCTION BY MONOPTEROS</scope>
    <scope>DEVELOPMENTAL STAGE</scope>
    <source>
        <strain>cv. Columbia</strain>
    </source>
</reference>
<reference key="10">
    <citation type="journal article" date="2019" name="Nature">
        <title>Mobile PEAR transcription factors integrate positional cues to prime cambial growth.</title>
        <authorList>
            <person name="Miyashima S."/>
            <person name="Roszak P."/>
            <person name="Sevilem I."/>
            <person name="Toyokura K."/>
            <person name="Blob B."/>
            <person name="Heo J.-O."/>
            <person name="Mellor N."/>
            <person name="Help-Rinta-Rahko H."/>
            <person name="Otero S."/>
            <person name="Smet W."/>
            <person name="Boekschoten M."/>
            <person name="Hooiveld G."/>
            <person name="Hashimoto K."/>
            <person name="Smetana O."/>
            <person name="Siligato R."/>
            <person name="Wallner E.-S."/>
            <person name="Maehoenen A.P."/>
            <person name="Kondo Y."/>
            <person name="Melnyk C.W."/>
            <person name="Greb T."/>
            <person name="Nakajima K."/>
            <person name="Sozzani R."/>
            <person name="Bishopp A."/>
            <person name="De Rybel B."/>
            <person name="Helariutta Y."/>
        </authorList>
    </citation>
    <scope>FUNCTION</scope>
    <scope>DISRUPTION PHENOTYPE</scope>
    <scope>TISSUE SPECIFICITY</scope>
    <scope>INDUCTION BY CYTOKININ</scope>
</reference>
<proteinExistence type="evidence at transcript level"/>
<name>DOF53_ARATH</name>
<protein>
    <recommendedName>
        <fullName evidence="7">Dof zinc finger protein DOF5.3</fullName>
        <shortName evidence="7">AtDOF5.3</shortName>
    </recommendedName>
    <alternativeName>
        <fullName evidence="9">Protein PHLOEM EARLY DOF TMO6</fullName>
    </alternativeName>
    <alternativeName>
        <fullName evidence="8">Protein TARGET OF MONOPTEROS 6</fullName>
        <shortName evidence="8">Protein TARGET OF MP 6</shortName>
    </alternativeName>
</protein>
<comment type="function">
    <text evidence="1 6">Transcription factor that binds specifically to a 5'-AA[AG]G-3' consensus core sequence (By similarity). The PEAR proteins (e.g. DOF2.4, DOF5.1, DOF3.2, DOF1.1, DOF5.6 and DOF5.3) activate gene expression that promotes radial growth of protophloem sieve elements (PubMed:30626969).</text>
</comment>
<comment type="subcellular location">
    <subcellularLocation>
        <location evidence="2">Nucleus</location>
    </subcellularLocation>
</comment>
<comment type="tissue specificity">
    <text evidence="5 6">The PEAR proteins (e.g. DOF2.4, DOF5.1, DOF3.2, DOF1.1, DOF5.6 and DOF5.3) form a short-range concentration gradient that peaks at protophloem sieve elements (PSE) (PubMed:30626969). Accumulates in the stele (PubMed:20563990).</text>
</comment>
<comment type="developmental stage">
    <text evidence="4 5">In embryos, present in cells relevant for root initiation and later in vascular tissues. At the globular stage, accumulates in cells adjacent to the hypophysis (extra-embryonic cell specified to become the founder cell of the primary root meristem) (PubMed:20220754). Expressed at preprocambial stages first in wide domains, and later confined to sites of vein development. In young seedlings, first observed in the central region of leaves primordia, and later strongly expressed at sites of midvein, first and second loops, and higher-order veins (PubMed:20563990).</text>
</comment>
<comment type="induction">
    <text evidence="4 6">By cytokinin in procambium (PubMed:30626969). Induced by the transcription factor MONOPTEROS (MP) in cells relevant for root initiation, and later in vascular tissues and hypophysis (PubMed:20220754).</text>
</comment>
<comment type="disruption phenotype">
    <text evidence="6">The pear1 pear2 tmo6 triple mutant variably displays reduced radial growth. The pear1 pear2 dof6 tmo6 quadruple mutant plants showed a greater uniform reduction in radial growth, associated with compromised symplastic trafficking.</text>
</comment>
<comment type="sequence caution" evidence="10">
    <conflict type="erroneous initiation">
        <sequence resource="EMBL-CDS" id="AAM63264"/>
    </conflict>
    <text>Truncated N-terminus.</text>
</comment>
<comment type="sequence caution" evidence="10">
    <conflict type="erroneous gene model prediction">
        <sequence resource="EMBL-CDS" id="BAA97501"/>
    </conflict>
</comment>
<accession>Q84TE9</accession>
<accession>Q0WRV9</accession>
<accession>Q8LDE1</accession>
<accession>Q9LSS6</accession>
<gene>
    <name evidence="7" type="primary">DOF5.3</name>
    <name evidence="8" type="synonym">TMO6</name>
    <name evidence="11" type="ordered locus">At5g60200</name>
    <name evidence="12" type="ORF">F15L12.9</name>
</gene>
<dbReference type="EMBL" id="AB026632">
    <property type="protein sequence ID" value="BAA97501.1"/>
    <property type="status" value="ALT_SEQ"/>
    <property type="molecule type" value="Genomic_DNA"/>
</dbReference>
<dbReference type="EMBL" id="CP002688">
    <property type="protein sequence ID" value="AED97292.1"/>
    <property type="molecule type" value="Genomic_DNA"/>
</dbReference>
<dbReference type="EMBL" id="AK228185">
    <property type="protein sequence ID" value="BAF00140.1"/>
    <property type="molecule type" value="mRNA"/>
</dbReference>
<dbReference type="EMBL" id="BT005866">
    <property type="protein sequence ID" value="AAO64801.1"/>
    <property type="molecule type" value="mRNA"/>
</dbReference>
<dbReference type="EMBL" id="AY086054">
    <property type="protein sequence ID" value="AAM63264.1"/>
    <property type="status" value="ALT_INIT"/>
    <property type="molecule type" value="mRNA"/>
</dbReference>
<dbReference type="EMBL" id="AB493803">
    <property type="protein sequence ID" value="BAH30641.1"/>
    <property type="molecule type" value="mRNA"/>
</dbReference>
<dbReference type="RefSeq" id="NP_568920.1">
    <property type="nucleotide sequence ID" value="NM_125413.4"/>
</dbReference>
<dbReference type="BioGRID" id="21386">
    <property type="interactions" value="4"/>
</dbReference>
<dbReference type="FunCoup" id="Q84TE9">
    <property type="interactions" value="296"/>
</dbReference>
<dbReference type="STRING" id="3702.Q84TE9"/>
<dbReference type="PaxDb" id="3702-AT5G60200.1"/>
<dbReference type="ProteomicsDB" id="222125"/>
<dbReference type="EnsemblPlants" id="AT5G60200.1">
    <property type="protein sequence ID" value="AT5G60200.1"/>
    <property type="gene ID" value="AT5G60200"/>
</dbReference>
<dbReference type="GeneID" id="836142"/>
<dbReference type="Gramene" id="AT5G60200.1">
    <property type="protein sequence ID" value="AT5G60200.1"/>
    <property type="gene ID" value="AT5G60200"/>
</dbReference>
<dbReference type="KEGG" id="ath:AT5G60200"/>
<dbReference type="Araport" id="AT5G60200"/>
<dbReference type="TAIR" id="AT5G60200">
    <property type="gene designation" value="TMO6"/>
</dbReference>
<dbReference type="eggNOG" id="ENOG502RB9Y">
    <property type="taxonomic scope" value="Eukaryota"/>
</dbReference>
<dbReference type="HOGENOM" id="CLU_036438_2_1_1"/>
<dbReference type="InParanoid" id="Q84TE9"/>
<dbReference type="OMA" id="MNGESFG"/>
<dbReference type="PhylomeDB" id="Q84TE9"/>
<dbReference type="PRO" id="PR:Q84TE9"/>
<dbReference type="Proteomes" id="UP000006548">
    <property type="component" value="Chromosome 5"/>
</dbReference>
<dbReference type="ExpressionAtlas" id="Q84TE9">
    <property type="expression patterns" value="baseline and differential"/>
</dbReference>
<dbReference type="GO" id="GO:0005634">
    <property type="term" value="C:nucleus"/>
    <property type="evidence" value="ECO:0000314"/>
    <property type="project" value="TAIR"/>
</dbReference>
<dbReference type="GO" id="GO:0003700">
    <property type="term" value="F:DNA-binding transcription factor activity"/>
    <property type="evidence" value="ECO:0000250"/>
    <property type="project" value="TAIR"/>
</dbReference>
<dbReference type="GO" id="GO:0000976">
    <property type="term" value="F:transcription cis-regulatory region binding"/>
    <property type="evidence" value="ECO:0000353"/>
    <property type="project" value="TAIR"/>
</dbReference>
<dbReference type="GO" id="GO:0008270">
    <property type="term" value="F:zinc ion binding"/>
    <property type="evidence" value="ECO:0007669"/>
    <property type="project" value="UniProtKB-KW"/>
</dbReference>
<dbReference type="GO" id="GO:0010087">
    <property type="term" value="P:phloem or xylem histogenesis"/>
    <property type="evidence" value="ECO:0000314"/>
    <property type="project" value="TAIR"/>
</dbReference>
<dbReference type="GO" id="GO:0006355">
    <property type="term" value="P:regulation of DNA-templated transcription"/>
    <property type="evidence" value="ECO:0000304"/>
    <property type="project" value="TAIR"/>
</dbReference>
<dbReference type="GO" id="GO:0048364">
    <property type="term" value="P:root development"/>
    <property type="evidence" value="ECO:0000270"/>
    <property type="project" value="TAIR"/>
</dbReference>
<dbReference type="GO" id="GO:0090057">
    <property type="term" value="P:root radial pattern formation"/>
    <property type="evidence" value="ECO:0000316"/>
    <property type="project" value="TAIR"/>
</dbReference>
<dbReference type="InterPro" id="IPR045174">
    <property type="entry name" value="Dof"/>
</dbReference>
<dbReference type="InterPro" id="IPR003851">
    <property type="entry name" value="Znf_Dof"/>
</dbReference>
<dbReference type="PANTHER" id="PTHR31992">
    <property type="entry name" value="DOF ZINC FINGER PROTEIN DOF1.4-RELATED"/>
    <property type="match status" value="1"/>
</dbReference>
<dbReference type="PANTHER" id="PTHR31992:SF221">
    <property type="entry name" value="DOF ZINC FINGER PROTEIN DOF3.2-RELATED"/>
    <property type="match status" value="1"/>
</dbReference>
<dbReference type="Pfam" id="PF02701">
    <property type="entry name" value="Zn_ribbon_Dof"/>
    <property type="match status" value="1"/>
</dbReference>
<dbReference type="PROSITE" id="PS01361">
    <property type="entry name" value="ZF_DOF_1"/>
    <property type="match status" value="1"/>
</dbReference>
<dbReference type="PROSITE" id="PS50884">
    <property type="entry name" value="ZF_DOF_2"/>
    <property type="match status" value="1"/>
</dbReference>